<reference key="1">
    <citation type="journal article" date="2008" name="Genome Res.">
        <title>Comparative genome analysis of Salmonella enteritidis PT4 and Salmonella gallinarum 287/91 provides insights into evolutionary and host adaptation pathways.</title>
        <authorList>
            <person name="Thomson N.R."/>
            <person name="Clayton D.J."/>
            <person name="Windhorst D."/>
            <person name="Vernikos G."/>
            <person name="Davidson S."/>
            <person name="Churcher C."/>
            <person name="Quail M.A."/>
            <person name="Stevens M."/>
            <person name="Jones M.A."/>
            <person name="Watson M."/>
            <person name="Barron A."/>
            <person name="Layton A."/>
            <person name="Pickard D."/>
            <person name="Kingsley R.A."/>
            <person name="Bignell A."/>
            <person name="Clark L."/>
            <person name="Harris B."/>
            <person name="Ormond D."/>
            <person name="Abdellah Z."/>
            <person name="Brooks K."/>
            <person name="Cherevach I."/>
            <person name="Chillingworth T."/>
            <person name="Woodward J."/>
            <person name="Norberczak H."/>
            <person name="Lord A."/>
            <person name="Arrowsmith C."/>
            <person name="Jagels K."/>
            <person name="Moule S."/>
            <person name="Mungall K."/>
            <person name="Saunders M."/>
            <person name="Whitehead S."/>
            <person name="Chabalgoity J.A."/>
            <person name="Maskell D."/>
            <person name="Humphreys T."/>
            <person name="Roberts M."/>
            <person name="Barrow P.A."/>
            <person name="Dougan G."/>
            <person name="Parkhill J."/>
        </authorList>
    </citation>
    <scope>NUCLEOTIDE SEQUENCE [LARGE SCALE GENOMIC DNA]</scope>
    <source>
        <strain>287/91 / NCTC 13346</strain>
    </source>
</reference>
<organism>
    <name type="scientific">Salmonella gallinarum (strain 287/91 / NCTC 13346)</name>
    <dbReference type="NCBI Taxonomy" id="550538"/>
    <lineage>
        <taxon>Bacteria</taxon>
        <taxon>Pseudomonadati</taxon>
        <taxon>Pseudomonadota</taxon>
        <taxon>Gammaproteobacteria</taxon>
        <taxon>Enterobacterales</taxon>
        <taxon>Enterobacteriaceae</taxon>
        <taxon>Salmonella</taxon>
    </lineage>
</organism>
<sequence>MKRTKSIHHASFRKSWSARHLTPVALAVTAVFMLAGCEKSDETVSLYQNADDCSAANPGKSAECTTAYNNALKEAERTAPKYATREDCVAEFGEGQCQQAPAQAGMAPENQAQSQQSSGSFWMPLMAGYMMGRLMGGGAGFAQQPLFSSKNPASPAYGKYTDAAGKNYGAAQPGRTMTVPKTAMAPKPATTTTVTRGGFGESVAKQSTMQRSAAGTSTRSMGG</sequence>
<name>YGIB_SALG2</name>
<comment type="similarity">
    <text evidence="1">Belongs to the UPF0441 family.</text>
</comment>
<proteinExistence type="inferred from homology"/>
<protein>
    <recommendedName>
        <fullName evidence="1">UPF0441 protein YgiB</fullName>
    </recommendedName>
</protein>
<evidence type="ECO:0000255" key="1">
    <source>
        <dbReference type="HAMAP-Rule" id="MF_01188"/>
    </source>
</evidence>
<evidence type="ECO:0000256" key="2">
    <source>
        <dbReference type="SAM" id="MobiDB-lite"/>
    </source>
</evidence>
<accession>B5REE6</accession>
<feature type="chain" id="PRO_1000138350" description="UPF0441 protein YgiB">
    <location>
        <begin position="1"/>
        <end position="223"/>
    </location>
</feature>
<feature type="region of interest" description="Disordered" evidence="2">
    <location>
        <begin position="201"/>
        <end position="223"/>
    </location>
</feature>
<feature type="compositionally biased region" description="Polar residues" evidence="2">
    <location>
        <begin position="204"/>
        <end position="223"/>
    </location>
</feature>
<gene>
    <name evidence="1" type="primary">ygiB</name>
    <name type="ordered locus">SG3084</name>
</gene>
<dbReference type="EMBL" id="AM933173">
    <property type="protein sequence ID" value="CAR38885.1"/>
    <property type="molecule type" value="Genomic_DNA"/>
</dbReference>
<dbReference type="RefSeq" id="WP_000831531.1">
    <property type="nucleotide sequence ID" value="NC_011274.1"/>
</dbReference>
<dbReference type="KEGG" id="seg:SG3084"/>
<dbReference type="HOGENOM" id="CLU_095624_0_0_6"/>
<dbReference type="Proteomes" id="UP000008321">
    <property type="component" value="Chromosome"/>
</dbReference>
<dbReference type="HAMAP" id="MF_01188">
    <property type="entry name" value="UPF0441"/>
    <property type="match status" value="1"/>
</dbReference>
<dbReference type="InterPro" id="IPR009576">
    <property type="entry name" value="Biofilm_formation_YgiB"/>
</dbReference>
<dbReference type="NCBIfam" id="NF008655">
    <property type="entry name" value="PRK11653.1"/>
    <property type="match status" value="1"/>
</dbReference>
<dbReference type="Pfam" id="PF06693">
    <property type="entry name" value="DUF1190"/>
    <property type="match status" value="1"/>
</dbReference>